<organism>
    <name type="scientific">Sus scrofa</name>
    <name type="common">Pig</name>
    <dbReference type="NCBI Taxonomy" id="9823"/>
    <lineage>
        <taxon>Eukaryota</taxon>
        <taxon>Metazoa</taxon>
        <taxon>Chordata</taxon>
        <taxon>Craniata</taxon>
        <taxon>Vertebrata</taxon>
        <taxon>Euteleostomi</taxon>
        <taxon>Mammalia</taxon>
        <taxon>Eutheria</taxon>
        <taxon>Laurasiatheria</taxon>
        <taxon>Artiodactyla</taxon>
        <taxon>Suina</taxon>
        <taxon>Suidae</taxon>
        <taxon>Sus</taxon>
    </lineage>
</organism>
<reference key="1">
    <citation type="submission" date="2007-02" db="EMBL/GenBank/DDBJ databases">
        <title>Expression of connexin 45 in the pig urinary bladder.</title>
        <authorList>
            <person name="Lehmann T."/>
            <person name="Dittrich R."/>
            <person name="John H."/>
            <person name="Maake C."/>
        </authorList>
    </citation>
    <scope>NUCLEOTIDE SEQUENCE [MRNA]</scope>
    <source>
        <tissue>Urinary bladder</tissue>
    </source>
</reference>
<gene>
    <name type="primary">GJC1</name>
    <name type="synonym">GJA7</name>
</gene>
<proteinExistence type="evidence at transcript level"/>
<feature type="chain" id="PRO_0000313006" description="Gap junction gamma-1 protein">
    <location>
        <begin position="1"/>
        <end position="396"/>
    </location>
</feature>
<feature type="topological domain" description="Cytoplasmic" evidence="2">
    <location>
        <begin position="1"/>
        <end position="22"/>
    </location>
</feature>
<feature type="transmembrane region" description="Helical" evidence="2">
    <location>
        <begin position="23"/>
        <end position="45"/>
    </location>
</feature>
<feature type="topological domain" description="Extracellular" evidence="2">
    <location>
        <begin position="46"/>
        <end position="75"/>
    </location>
</feature>
<feature type="transmembrane region" description="Helical" evidence="2">
    <location>
        <begin position="76"/>
        <end position="95"/>
    </location>
</feature>
<feature type="topological domain" description="Cytoplasmic" evidence="2">
    <location>
        <begin position="96"/>
        <end position="175"/>
    </location>
</feature>
<feature type="transmembrane region" description="Helical" evidence="2">
    <location>
        <begin position="176"/>
        <end position="198"/>
    </location>
</feature>
<feature type="topological domain" description="Extracellular" evidence="2">
    <location>
        <begin position="199"/>
        <end position="228"/>
    </location>
</feature>
<feature type="transmembrane region" description="Helical" evidence="2">
    <location>
        <begin position="229"/>
        <end position="248"/>
    </location>
</feature>
<feature type="topological domain" description="Cytoplasmic" evidence="2">
    <location>
        <begin position="249"/>
        <end position="396"/>
    </location>
</feature>
<feature type="region of interest" description="Disordered" evidence="3">
    <location>
        <begin position="145"/>
        <end position="165"/>
    </location>
</feature>
<feature type="region of interest" description="Disordered" evidence="3">
    <location>
        <begin position="357"/>
        <end position="396"/>
    </location>
</feature>
<feature type="compositionally biased region" description="Basic and acidic residues" evidence="3">
    <location>
        <begin position="147"/>
        <end position="156"/>
    </location>
</feature>
<feature type="compositionally biased region" description="Low complexity" evidence="3">
    <location>
        <begin position="373"/>
        <end position="396"/>
    </location>
</feature>
<comment type="function">
    <text evidence="1">One gap junction consists of a cluster of closely packed pairs of transmembrane channels, the connexons, through which materials of low MW diffuse from one cell to a neighboring cell.</text>
</comment>
<comment type="subunit">
    <text evidence="1">A connexon is composed of a hexamer of connexins. Interacts with CNST (By similarity).</text>
</comment>
<comment type="subcellular location">
    <subcellularLocation>
        <location evidence="1">Cell membrane</location>
        <topology evidence="1">Multi-pass membrane protein</topology>
    </subcellularLocation>
    <subcellularLocation>
        <location evidence="1">Cell junction</location>
        <location evidence="1">Gap junction</location>
    </subcellularLocation>
</comment>
<comment type="similarity">
    <text evidence="4">Belongs to the connexin family. Gamma-type subfamily.</text>
</comment>
<dbReference type="EMBL" id="EF437944">
    <property type="protein sequence ID" value="ABO28479.1"/>
    <property type="molecule type" value="mRNA"/>
</dbReference>
<dbReference type="RefSeq" id="NP_001090988.1">
    <property type="nucleotide sequence ID" value="NM_001097519.1"/>
</dbReference>
<dbReference type="RefSeq" id="XP_005668761.1">
    <property type="nucleotide sequence ID" value="XM_005668704.3"/>
</dbReference>
<dbReference type="RefSeq" id="XP_005668762.1">
    <property type="nucleotide sequence ID" value="XM_005668705.3"/>
</dbReference>
<dbReference type="RefSeq" id="XP_005668763.1">
    <property type="nucleotide sequence ID" value="XM_005668706.2"/>
</dbReference>
<dbReference type="RefSeq" id="XP_005668765.1">
    <property type="nucleotide sequence ID" value="XM_005668708.3"/>
</dbReference>
<dbReference type="RefSeq" id="XP_013836322.1">
    <property type="nucleotide sequence ID" value="XM_013980868.2"/>
</dbReference>
<dbReference type="SMR" id="A4GVD1"/>
<dbReference type="FunCoup" id="A4GVD1">
    <property type="interactions" value="219"/>
</dbReference>
<dbReference type="STRING" id="9823.ENSSSCP00000070627"/>
<dbReference type="PaxDb" id="9823-ENSSSCP00000021968"/>
<dbReference type="Ensembl" id="ENSSSCT00000030363.3">
    <property type="protein sequence ID" value="ENSSSCP00000021968.1"/>
    <property type="gene ID" value="ENSSSCG00000021306.4"/>
</dbReference>
<dbReference type="Ensembl" id="ENSSSCT00000051568.2">
    <property type="protein sequence ID" value="ENSSSCP00000040946.1"/>
    <property type="gene ID" value="ENSSSCG00000021306.4"/>
</dbReference>
<dbReference type="Ensembl" id="ENSSSCT00000090660.2">
    <property type="protein sequence ID" value="ENSSSCP00000070627.1"/>
    <property type="gene ID" value="ENSSSCG00000021306.4"/>
</dbReference>
<dbReference type="Ensembl" id="ENSSSCT00015083049.1">
    <property type="protein sequence ID" value="ENSSSCP00015033594.1"/>
    <property type="gene ID" value="ENSSSCG00015062216.1"/>
</dbReference>
<dbReference type="Ensembl" id="ENSSSCT00015083061.1">
    <property type="protein sequence ID" value="ENSSSCP00015033600.1"/>
    <property type="gene ID" value="ENSSSCG00015062216.1"/>
</dbReference>
<dbReference type="Ensembl" id="ENSSSCT00015083083.1">
    <property type="protein sequence ID" value="ENSSSCP00015033612.1"/>
    <property type="gene ID" value="ENSSSCG00015062216.1"/>
</dbReference>
<dbReference type="Ensembl" id="ENSSSCT00015083144.1">
    <property type="protein sequence ID" value="ENSSSCP00015033642.1"/>
    <property type="gene ID" value="ENSSSCG00015062216.1"/>
</dbReference>
<dbReference type="Ensembl" id="ENSSSCT00025077396.1">
    <property type="protein sequence ID" value="ENSSSCP00025033544.1"/>
    <property type="gene ID" value="ENSSSCG00025056612.1"/>
</dbReference>
<dbReference type="Ensembl" id="ENSSSCT00025077454.1">
    <property type="protein sequence ID" value="ENSSSCP00025033568.1"/>
    <property type="gene ID" value="ENSSSCG00025056612.1"/>
</dbReference>
<dbReference type="Ensembl" id="ENSSSCT00025077505.1">
    <property type="protein sequence ID" value="ENSSSCP00025033590.1"/>
    <property type="gene ID" value="ENSSSCG00025056612.1"/>
</dbReference>
<dbReference type="Ensembl" id="ENSSSCT00025077561.1">
    <property type="protein sequence ID" value="ENSSSCP00025033618.1"/>
    <property type="gene ID" value="ENSSSCG00025056612.1"/>
</dbReference>
<dbReference type="Ensembl" id="ENSSSCT00025077622.1">
    <property type="protein sequence ID" value="ENSSSCP00025033644.1"/>
    <property type="gene ID" value="ENSSSCG00025056612.1"/>
</dbReference>
<dbReference type="Ensembl" id="ENSSSCT00030083182.1">
    <property type="protein sequence ID" value="ENSSSCP00030038221.1"/>
    <property type="gene ID" value="ENSSSCG00030059596.1"/>
</dbReference>
<dbReference type="Ensembl" id="ENSSSCT00030083199.1">
    <property type="protein sequence ID" value="ENSSSCP00030038229.1"/>
    <property type="gene ID" value="ENSSSCG00030059596.1"/>
</dbReference>
<dbReference type="Ensembl" id="ENSSSCT00030083218.1">
    <property type="protein sequence ID" value="ENSSSCP00030038241.1"/>
    <property type="gene ID" value="ENSSSCG00030059596.1"/>
</dbReference>
<dbReference type="Ensembl" id="ENSSSCT00030083232.1">
    <property type="protein sequence ID" value="ENSSSCP00030038246.1"/>
    <property type="gene ID" value="ENSSSCG00030059596.1"/>
</dbReference>
<dbReference type="Ensembl" id="ENSSSCT00035098696.1">
    <property type="protein sequence ID" value="ENSSSCP00035041720.1"/>
    <property type="gene ID" value="ENSSSCG00035072893.1"/>
</dbReference>
<dbReference type="Ensembl" id="ENSSSCT00035098701.1">
    <property type="protein sequence ID" value="ENSSSCP00035041725.1"/>
    <property type="gene ID" value="ENSSSCG00035072893.1"/>
</dbReference>
<dbReference type="Ensembl" id="ENSSSCT00035098707.1">
    <property type="protein sequence ID" value="ENSSSCP00035041729.1"/>
    <property type="gene ID" value="ENSSSCG00035072893.1"/>
</dbReference>
<dbReference type="Ensembl" id="ENSSSCT00035098710.1">
    <property type="protein sequence ID" value="ENSSSCP00035041731.1"/>
    <property type="gene ID" value="ENSSSCG00035072893.1"/>
</dbReference>
<dbReference type="Ensembl" id="ENSSSCT00040052164.1">
    <property type="protein sequence ID" value="ENSSSCP00040021649.1"/>
    <property type="gene ID" value="ENSSSCG00040039026.1"/>
</dbReference>
<dbReference type="Ensembl" id="ENSSSCT00040052187.1">
    <property type="protein sequence ID" value="ENSSSCP00040021660.1"/>
    <property type="gene ID" value="ENSSSCG00040039026.1"/>
</dbReference>
<dbReference type="Ensembl" id="ENSSSCT00040052217.1">
    <property type="protein sequence ID" value="ENSSSCP00040021671.1"/>
    <property type="gene ID" value="ENSSSCG00040039026.1"/>
</dbReference>
<dbReference type="Ensembl" id="ENSSSCT00040052238.1">
    <property type="protein sequence ID" value="ENSSSCP00040021679.1"/>
    <property type="gene ID" value="ENSSSCG00040039026.1"/>
</dbReference>
<dbReference type="Ensembl" id="ENSSSCT00045024535.1">
    <property type="protein sequence ID" value="ENSSSCP00045016949.1"/>
    <property type="gene ID" value="ENSSSCG00045014408.1"/>
</dbReference>
<dbReference type="Ensembl" id="ENSSSCT00045024549.1">
    <property type="protein sequence ID" value="ENSSSCP00045016958.1"/>
    <property type="gene ID" value="ENSSSCG00045014408.1"/>
</dbReference>
<dbReference type="Ensembl" id="ENSSSCT00045024557.1">
    <property type="protein sequence ID" value="ENSSSCP00045016965.1"/>
    <property type="gene ID" value="ENSSSCG00045014408.1"/>
</dbReference>
<dbReference type="Ensembl" id="ENSSSCT00045024565.1">
    <property type="protein sequence ID" value="ENSSSCP00045016970.1"/>
    <property type="gene ID" value="ENSSSCG00045014408.1"/>
</dbReference>
<dbReference type="Ensembl" id="ENSSSCT00060103158.1">
    <property type="protein sequence ID" value="ENSSSCP00060044998.1"/>
    <property type="gene ID" value="ENSSSCG00060075392.1"/>
</dbReference>
<dbReference type="Ensembl" id="ENSSSCT00060103166.1">
    <property type="protein sequence ID" value="ENSSSCP00060045004.1"/>
    <property type="gene ID" value="ENSSSCG00060075392.1"/>
</dbReference>
<dbReference type="Ensembl" id="ENSSSCT00060103170.1">
    <property type="protein sequence ID" value="ENSSSCP00060045005.1"/>
    <property type="gene ID" value="ENSSSCG00060075392.1"/>
</dbReference>
<dbReference type="Ensembl" id="ENSSSCT00060103174.1">
    <property type="protein sequence ID" value="ENSSSCP00060045010.1"/>
    <property type="gene ID" value="ENSSSCG00060075392.1"/>
</dbReference>
<dbReference type="Ensembl" id="ENSSSCT00065044570.1">
    <property type="protein sequence ID" value="ENSSSCP00065019037.1"/>
    <property type="gene ID" value="ENSSSCG00065032858.1"/>
</dbReference>
<dbReference type="Ensembl" id="ENSSSCT00065044574.1">
    <property type="protein sequence ID" value="ENSSSCP00065019039.1"/>
    <property type="gene ID" value="ENSSSCG00065032858.1"/>
</dbReference>
<dbReference type="Ensembl" id="ENSSSCT00065044577.1">
    <property type="protein sequence ID" value="ENSSSCP00065019041.1"/>
    <property type="gene ID" value="ENSSSCG00065032858.1"/>
</dbReference>
<dbReference type="Ensembl" id="ENSSSCT00065044580.1">
    <property type="protein sequence ID" value="ENSSSCP00065019043.1"/>
    <property type="gene ID" value="ENSSSCG00065032858.1"/>
</dbReference>
<dbReference type="Ensembl" id="ENSSSCT00070018503.1">
    <property type="protein sequence ID" value="ENSSSCP00070015376.1"/>
    <property type="gene ID" value="ENSSSCG00070009539.1"/>
</dbReference>
<dbReference type="Ensembl" id="ENSSSCT00070018510.1">
    <property type="protein sequence ID" value="ENSSSCP00070015382.1"/>
    <property type="gene ID" value="ENSSSCG00070009539.1"/>
</dbReference>
<dbReference type="Ensembl" id="ENSSSCT00070018515.1">
    <property type="protein sequence ID" value="ENSSSCP00070015385.1"/>
    <property type="gene ID" value="ENSSSCG00070009539.1"/>
</dbReference>
<dbReference type="Ensembl" id="ENSSSCT00085004462">
    <property type="protein sequence ID" value="ENSSSCP00085003389"/>
    <property type="gene ID" value="ENSSSCG00085002499"/>
</dbReference>
<dbReference type="Ensembl" id="ENSSSCT00085004466">
    <property type="protein sequence ID" value="ENSSSCP00085003391"/>
    <property type="gene ID" value="ENSSSCG00085002499"/>
</dbReference>
<dbReference type="Ensembl" id="ENSSSCT00085004475">
    <property type="protein sequence ID" value="ENSSSCP00085003395"/>
    <property type="gene ID" value="ENSSSCG00085002499"/>
</dbReference>
<dbReference type="Ensembl" id="ENSSSCT00085004485">
    <property type="protein sequence ID" value="ENSSSCP00085003399"/>
    <property type="gene ID" value="ENSSSCG00085002499"/>
</dbReference>
<dbReference type="Ensembl" id="ENSSSCT00085004492">
    <property type="protein sequence ID" value="ENSSSCP00085003401"/>
    <property type="gene ID" value="ENSSSCG00085002499"/>
</dbReference>
<dbReference type="Ensembl" id="ENSSSCT00085004499">
    <property type="protein sequence ID" value="ENSSSCP00085003405"/>
    <property type="gene ID" value="ENSSSCG00085002499"/>
</dbReference>
<dbReference type="Ensembl" id="ENSSSCT00085004506">
    <property type="protein sequence ID" value="ENSSSCP00085003407"/>
    <property type="gene ID" value="ENSSSCG00085002499"/>
</dbReference>
<dbReference type="Ensembl" id="ENSSSCT00085004515">
    <property type="protein sequence ID" value="ENSSSCP00085003412"/>
    <property type="gene ID" value="ENSSSCG00085002499"/>
</dbReference>
<dbReference type="Ensembl" id="ENSSSCT00085004520">
    <property type="protein sequence ID" value="ENSSSCP00085003414"/>
    <property type="gene ID" value="ENSSSCG00085002499"/>
</dbReference>
<dbReference type="Ensembl" id="ENSSSCT00090007200">
    <property type="protein sequence ID" value="ENSSSCP00090004301"/>
    <property type="gene ID" value="ENSSSCG00090004147"/>
</dbReference>
<dbReference type="Ensembl" id="ENSSSCT00090007207">
    <property type="protein sequence ID" value="ENSSSCP00090004304"/>
    <property type="gene ID" value="ENSSSCG00090004147"/>
</dbReference>
<dbReference type="Ensembl" id="ENSSSCT00090007215">
    <property type="protein sequence ID" value="ENSSSCP00090004309"/>
    <property type="gene ID" value="ENSSSCG00090004147"/>
</dbReference>
<dbReference type="Ensembl" id="ENSSSCT00090007222">
    <property type="protein sequence ID" value="ENSSSCP00090004319"/>
    <property type="gene ID" value="ENSSSCG00090004147"/>
</dbReference>
<dbReference type="Ensembl" id="ENSSSCT00090007235">
    <property type="protein sequence ID" value="ENSSSCP00090004323"/>
    <property type="gene ID" value="ENSSSCG00090004147"/>
</dbReference>
<dbReference type="Ensembl" id="ENSSSCT00090007243">
    <property type="protein sequence ID" value="ENSSSCP00090004327"/>
    <property type="gene ID" value="ENSSSCG00090004147"/>
</dbReference>
<dbReference type="Ensembl" id="ENSSSCT00090007247">
    <property type="protein sequence ID" value="ENSSSCP00090004330"/>
    <property type="gene ID" value="ENSSSCG00090004147"/>
</dbReference>
<dbReference type="Ensembl" id="ENSSSCT00090007251">
    <property type="protein sequence ID" value="ENSSSCP00090004333"/>
    <property type="gene ID" value="ENSSSCG00090004147"/>
</dbReference>
<dbReference type="Ensembl" id="ENSSSCT00090007255">
    <property type="protein sequence ID" value="ENSSSCP00090004335"/>
    <property type="gene ID" value="ENSSSCG00090004147"/>
</dbReference>
<dbReference type="Ensembl" id="ENSSSCT00090007260">
    <property type="protein sequence ID" value="ENSSSCP00090004337"/>
    <property type="gene ID" value="ENSSSCG00090004147"/>
</dbReference>
<dbReference type="Ensembl" id="ENSSSCT00105052401">
    <property type="protein sequence ID" value="ENSSSCP00105036857"/>
    <property type="gene ID" value="ENSSSCG00105027596"/>
</dbReference>
<dbReference type="Ensembl" id="ENSSSCT00105052425">
    <property type="protein sequence ID" value="ENSSSCP00105036870"/>
    <property type="gene ID" value="ENSSSCG00105027596"/>
</dbReference>
<dbReference type="Ensembl" id="ENSSSCT00105052436">
    <property type="protein sequence ID" value="ENSSSCP00105036875"/>
    <property type="gene ID" value="ENSSSCG00105027596"/>
</dbReference>
<dbReference type="Ensembl" id="ENSSSCT00105052443">
    <property type="protein sequence ID" value="ENSSSCP00105036878"/>
    <property type="gene ID" value="ENSSSCG00105027596"/>
</dbReference>
<dbReference type="Ensembl" id="ENSSSCT00105052456">
    <property type="protein sequence ID" value="ENSSSCP00105036889"/>
    <property type="gene ID" value="ENSSSCG00105027596"/>
</dbReference>
<dbReference type="Ensembl" id="ENSSSCT00105052459">
    <property type="protein sequence ID" value="ENSSSCP00105036892"/>
    <property type="gene ID" value="ENSSSCG00105027596"/>
</dbReference>
<dbReference type="Ensembl" id="ENSSSCT00105052468">
    <property type="protein sequence ID" value="ENSSSCP00105036897"/>
    <property type="gene ID" value="ENSSSCG00105027596"/>
</dbReference>
<dbReference type="Ensembl" id="ENSSSCT00105052478">
    <property type="protein sequence ID" value="ENSSSCP00105036905"/>
    <property type="gene ID" value="ENSSSCG00105027596"/>
</dbReference>
<dbReference type="Ensembl" id="ENSSSCT00105052491">
    <property type="protein sequence ID" value="ENSSSCP00105036915"/>
    <property type="gene ID" value="ENSSSCG00105027596"/>
</dbReference>
<dbReference type="Ensembl" id="ENSSSCT00105052507">
    <property type="protein sequence ID" value="ENSSSCP00105036928"/>
    <property type="gene ID" value="ENSSSCG00105027596"/>
</dbReference>
<dbReference type="Ensembl" id="ENSSSCT00110045908">
    <property type="protein sequence ID" value="ENSSSCP00110032356"/>
    <property type="gene ID" value="ENSSSCG00110023768"/>
</dbReference>
<dbReference type="Ensembl" id="ENSSSCT00110045926">
    <property type="protein sequence ID" value="ENSSSCP00110032367"/>
    <property type="gene ID" value="ENSSSCG00110023768"/>
</dbReference>
<dbReference type="Ensembl" id="ENSSSCT00110045932">
    <property type="protein sequence ID" value="ENSSSCP00110032372"/>
    <property type="gene ID" value="ENSSSCG00110023768"/>
</dbReference>
<dbReference type="Ensembl" id="ENSSSCT00110045936">
    <property type="protein sequence ID" value="ENSSSCP00110032373"/>
    <property type="gene ID" value="ENSSSCG00110023768"/>
</dbReference>
<dbReference type="Ensembl" id="ENSSSCT00110045946">
    <property type="protein sequence ID" value="ENSSSCP00110032377"/>
    <property type="gene ID" value="ENSSSCG00110023768"/>
</dbReference>
<dbReference type="Ensembl" id="ENSSSCT00110045954">
    <property type="protein sequence ID" value="ENSSSCP00110032382"/>
    <property type="gene ID" value="ENSSSCG00110023768"/>
</dbReference>
<dbReference type="Ensembl" id="ENSSSCT00110045964">
    <property type="protein sequence ID" value="ENSSSCP00110032388"/>
    <property type="gene ID" value="ENSSSCG00110023768"/>
</dbReference>
<dbReference type="Ensembl" id="ENSSSCT00110045972">
    <property type="protein sequence ID" value="ENSSSCP00110032393"/>
    <property type="gene ID" value="ENSSSCG00110023768"/>
</dbReference>
<dbReference type="Ensembl" id="ENSSSCT00110045989">
    <property type="protein sequence ID" value="ENSSSCP00110032414"/>
    <property type="gene ID" value="ENSSSCG00110023768"/>
</dbReference>
<dbReference type="Ensembl" id="ENSSSCT00110046049">
    <property type="protein sequence ID" value="ENSSSCP00110032451"/>
    <property type="gene ID" value="ENSSSCG00110023768"/>
</dbReference>
<dbReference type="Ensembl" id="ENSSSCT00115013836">
    <property type="protein sequence ID" value="ENSSSCP00115013080"/>
    <property type="gene ID" value="ENSSSCG00115007920"/>
</dbReference>
<dbReference type="Ensembl" id="ENSSSCT00130014597">
    <property type="protein sequence ID" value="ENSSSCP00130009769"/>
    <property type="gene ID" value="ENSSSCG00130007956"/>
</dbReference>
<dbReference type="Ensembl" id="ENSSSCT00130014599">
    <property type="protein sequence ID" value="ENSSSCP00130009771"/>
    <property type="gene ID" value="ENSSSCG00130007956"/>
</dbReference>
<dbReference type="Ensembl" id="ENSSSCT00130014602">
    <property type="protein sequence ID" value="ENSSSCP00130009774"/>
    <property type="gene ID" value="ENSSSCG00130007956"/>
</dbReference>
<dbReference type="Ensembl" id="ENSSSCT00130014605">
    <property type="protein sequence ID" value="ENSSSCP00130009776"/>
    <property type="gene ID" value="ENSSSCG00130007956"/>
</dbReference>
<dbReference type="Ensembl" id="ENSSSCT00130014608">
    <property type="protein sequence ID" value="ENSSSCP00130009780"/>
    <property type="gene ID" value="ENSSSCG00130007956"/>
</dbReference>
<dbReference type="Ensembl" id="ENSSSCT00130014609">
    <property type="protein sequence ID" value="ENSSSCP00130009781"/>
    <property type="gene ID" value="ENSSSCG00130007956"/>
</dbReference>
<dbReference type="Ensembl" id="ENSSSCT00130014612">
    <property type="protein sequence ID" value="ENSSSCP00130009784"/>
    <property type="gene ID" value="ENSSSCG00130007956"/>
</dbReference>
<dbReference type="Ensembl" id="ENSSSCT00130014614">
    <property type="protein sequence ID" value="ENSSSCP00130009786"/>
    <property type="gene ID" value="ENSSSCG00130007956"/>
</dbReference>
<dbReference type="Ensembl" id="ENSSSCT00130014617">
    <property type="protein sequence ID" value="ENSSSCP00130009789"/>
    <property type="gene ID" value="ENSSSCG00130007956"/>
</dbReference>
<dbReference type="GeneID" id="100048959"/>
<dbReference type="KEGG" id="ssc:100048959"/>
<dbReference type="CTD" id="10052"/>
<dbReference type="VGNC" id="VGNC:88468">
    <property type="gene designation" value="GJC1"/>
</dbReference>
<dbReference type="eggNOG" id="ENOG502QV2G">
    <property type="taxonomic scope" value="Eukaryota"/>
</dbReference>
<dbReference type="GeneTree" id="ENSGT01130000278276"/>
<dbReference type="HOGENOM" id="CLU_037388_0_0_1"/>
<dbReference type="InParanoid" id="A4GVD1"/>
<dbReference type="OMA" id="VRWKQHR"/>
<dbReference type="OrthoDB" id="8875898at2759"/>
<dbReference type="TreeFam" id="TF329606"/>
<dbReference type="Reactome" id="R-SSC-112303">
    <property type="pathway name" value="Electric Transmission Across Gap Junctions"/>
</dbReference>
<dbReference type="Reactome" id="R-SSC-190861">
    <property type="pathway name" value="Gap junction assembly"/>
</dbReference>
<dbReference type="Proteomes" id="UP000008227">
    <property type="component" value="Chromosome 12"/>
</dbReference>
<dbReference type="Proteomes" id="UP000314985">
    <property type="component" value="Chromosome 12"/>
</dbReference>
<dbReference type="Proteomes" id="UP000694570">
    <property type="component" value="Unplaced"/>
</dbReference>
<dbReference type="Proteomes" id="UP000694571">
    <property type="component" value="Unplaced"/>
</dbReference>
<dbReference type="Proteomes" id="UP000694720">
    <property type="component" value="Unplaced"/>
</dbReference>
<dbReference type="Proteomes" id="UP000694722">
    <property type="component" value="Unplaced"/>
</dbReference>
<dbReference type="Proteomes" id="UP000694723">
    <property type="component" value="Unplaced"/>
</dbReference>
<dbReference type="Proteomes" id="UP000694724">
    <property type="component" value="Unplaced"/>
</dbReference>
<dbReference type="Proteomes" id="UP000694725">
    <property type="component" value="Unplaced"/>
</dbReference>
<dbReference type="Proteomes" id="UP000694726">
    <property type="component" value="Unplaced"/>
</dbReference>
<dbReference type="Proteomes" id="UP000694727">
    <property type="component" value="Unplaced"/>
</dbReference>
<dbReference type="Proteomes" id="UP000694728">
    <property type="component" value="Unplaced"/>
</dbReference>
<dbReference type="Bgee" id="ENSSSCG00000021306">
    <property type="expression patterns" value="Expressed in hindlimb bud and 41 other cell types or tissues"/>
</dbReference>
<dbReference type="GO" id="GO:0005922">
    <property type="term" value="C:connexin complex"/>
    <property type="evidence" value="ECO:0000318"/>
    <property type="project" value="GO_Central"/>
</dbReference>
<dbReference type="GO" id="GO:0005783">
    <property type="term" value="C:endoplasmic reticulum"/>
    <property type="evidence" value="ECO:0007669"/>
    <property type="project" value="Ensembl"/>
</dbReference>
<dbReference type="GO" id="GO:0005654">
    <property type="term" value="C:nucleoplasm"/>
    <property type="evidence" value="ECO:0007669"/>
    <property type="project" value="Ensembl"/>
</dbReference>
<dbReference type="GO" id="GO:0045202">
    <property type="term" value="C:synapse"/>
    <property type="evidence" value="ECO:0007669"/>
    <property type="project" value="GOC"/>
</dbReference>
<dbReference type="GO" id="GO:0005243">
    <property type="term" value="F:gap junction channel activity"/>
    <property type="evidence" value="ECO:0000318"/>
    <property type="project" value="GO_Central"/>
</dbReference>
<dbReference type="GO" id="GO:0086077">
    <property type="term" value="F:gap junction channel activity involved in AV node cell-bundle of His cell electrical coupling"/>
    <property type="evidence" value="ECO:0007669"/>
    <property type="project" value="Ensembl"/>
</dbReference>
<dbReference type="GO" id="GO:0005216">
    <property type="term" value="F:monoatomic ion channel activity"/>
    <property type="evidence" value="ECO:0007669"/>
    <property type="project" value="Ensembl"/>
</dbReference>
<dbReference type="GO" id="GO:0048738">
    <property type="term" value="P:cardiac muscle tissue development"/>
    <property type="evidence" value="ECO:0007669"/>
    <property type="project" value="Ensembl"/>
</dbReference>
<dbReference type="GO" id="GO:0048468">
    <property type="term" value="P:cell development"/>
    <property type="evidence" value="ECO:0007669"/>
    <property type="project" value="Ensembl"/>
</dbReference>
<dbReference type="GO" id="GO:0007267">
    <property type="term" value="P:cell-cell signaling"/>
    <property type="evidence" value="ECO:0000318"/>
    <property type="project" value="GO_Central"/>
</dbReference>
<dbReference type="GO" id="GO:0007268">
    <property type="term" value="P:chemical synaptic transmission"/>
    <property type="evidence" value="ECO:0007669"/>
    <property type="project" value="Ensembl"/>
</dbReference>
<dbReference type="GO" id="GO:0016264">
    <property type="term" value="P:gap junction assembly"/>
    <property type="evidence" value="ECO:0007669"/>
    <property type="project" value="Ensembl"/>
</dbReference>
<dbReference type="GO" id="GO:0001570">
    <property type="term" value="P:vasculogenesis"/>
    <property type="evidence" value="ECO:0007669"/>
    <property type="project" value="Ensembl"/>
</dbReference>
<dbReference type="GO" id="GO:0007601">
    <property type="term" value="P:visual perception"/>
    <property type="evidence" value="ECO:0007669"/>
    <property type="project" value="Ensembl"/>
</dbReference>
<dbReference type="FunFam" id="1.20.1440.80:FF:000003">
    <property type="entry name" value="Gap junction protein"/>
    <property type="match status" value="1"/>
</dbReference>
<dbReference type="Gene3D" id="1.20.1440.80">
    <property type="entry name" value="Gap junction channel protein cysteine-rich domain"/>
    <property type="match status" value="1"/>
</dbReference>
<dbReference type="InterPro" id="IPR000500">
    <property type="entry name" value="Connexin"/>
</dbReference>
<dbReference type="InterPro" id="IPR002265">
    <property type="entry name" value="Connexin45"/>
</dbReference>
<dbReference type="InterPro" id="IPR019570">
    <property type="entry name" value="Connexin_CCC"/>
</dbReference>
<dbReference type="InterPro" id="IPR017990">
    <property type="entry name" value="Connexin_CS"/>
</dbReference>
<dbReference type="InterPro" id="IPR013092">
    <property type="entry name" value="Connexin_N"/>
</dbReference>
<dbReference type="InterPro" id="IPR038359">
    <property type="entry name" value="Connexin_N_sf"/>
</dbReference>
<dbReference type="PANTHER" id="PTHR11984">
    <property type="entry name" value="CONNEXIN"/>
    <property type="match status" value="1"/>
</dbReference>
<dbReference type="PANTHER" id="PTHR11984:SF6">
    <property type="entry name" value="GAP JUNCTION GAMMA-1 PROTEIN"/>
    <property type="match status" value="1"/>
</dbReference>
<dbReference type="Pfam" id="PF00029">
    <property type="entry name" value="Connexin"/>
    <property type="match status" value="1"/>
</dbReference>
<dbReference type="PRINTS" id="PR00206">
    <property type="entry name" value="CONNEXIN"/>
</dbReference>
<dbReference type="PRINTS" id="PR01136">
    <property type="entry name" value="CONNEXINA6"/>
</dbReference>
<dbReference type="SMART" id="SM00037">
    <property type="entry name" value="CNX"/>
    <property type="match status" value="1"/>
</dbReference>
<dbReference type="SMART" id="SM01089">
    <property type="entry name" value="Connexin_CCC"/>
    <property type="match status" value="1"/>
</dbReference>
<dbReference type="PROSITE" id="PS00407">
    <property type="entry name" value="CONNEXINS_1"/>
    <property type="match status" value="1"/>
</dbReference>
<dbReference type="PROSITE" id="PS00408">
    <property type="entry name" value="CONNEXINS_2"/>
    <property type="match status" value="1"/>
</dbReference>
<keyword id="KW-0965">Cell junction</keyword>
<keyword id="KW-1003">Cell membrane</keyword>
<keyword id="KW-0303">Gap junction</keyword>
<keyword id="KW-0472">Membrane</keyword>
<keyword id="KW-1185">Reference proteome</keyword>
<keyword id="KW-0812">Transmembrane</keyword>
<keyword id="KW-1133">Transmembrane helix</keyword>
<sequence>MSWSFLTRLLEEIHNHSTFVGKIWLTVLIVFRIVLTAVGGESIYYDEQSKFVCNTEQPGCENVCYDAFAPLSHVRFWVFQIILVATPSVMYLGYAIHKIAKMEHGEADKKAARSKPYAMRWKQHRALEETEEDHEEDPMMYPEMELESEKENKEQNQSKPKHDGRRRIREDGLMKIYVLQLLARTMFEVGFLIGQYFLYGFQVHPFYVCSRVPCPHKIDCFISRPTEKTIFLLIMYGVTGLCLLLNIWEMLHLGFGTIRDSLNSKRRELEDPGAYNYPFTWNTPSAPPGYNIAVKPDQIQYTELSNAKIAYKQNKANIAQEQQYGSHEETLPADLETLQREIRMAQERLDLAIQAYNHQNNPHGPREKKAKVGSKAGSNKSSASSKSGDGKTSVWI</sequence>
<protein>
    <recommendedName>
        <fullName>Gap junction gamma-1 protein</fullName>
    </recommendedName>
    <alternativeName>
        <fullName>Connexin-45</fullName>
        <shortName>Cx45</shortName>
    </alternativeName>
    <alternativeName>
        <fullName>Gap junction alpha-7 protein</fullName>
    </alternativeName>
</protein>
<evidence type="ECO:0000250" key="1"/>
<evidence type="ECO:0000255" key="2"/>
<evidence type="ECO:0000256" key="3">
    <source>
        <dbReference type="SAM" id="MobiDB-lite"/>
    </source>
</evidence>
<evidence type="ECO:0000305" key="4"/>
<name>CXG1_PIG</name>
<accession>A4GVD1</accession>